<keyword id="KW-0024">Alternative initiation</keyword>
<keyword id="KW-0053">Apoptosis</keyword>
<keyword id="KW-0968">Cytoplasmic vesicle</keyword>
<keyword id="KW-0221">Differentiation</keyword>
<keyword id="KW-0903">Direct protein sequencing</keyword>
<keyword id="KW-1015">Disulfide bond</keyword>
<keyword id="KW-0646">Protease inhibitor</keyword>
<keyword id="KW-1185">Reference proteome</keyword>
<keyword id="KW-0964">Secreted</keyword>
<keyword id="KW-0722">Serine protease inhibitor</keyword>
<keyword id="KW-0732">Signal</keyword>
<keyword id="KW-0744">Spermatogenesis</keyword>
<sequence>MLRLVLLLLVTDFAASHETLDSSDSQIMKRSQFRTPDCGHFDFPACPRNLNPVCGTDMNTYSNECTLCMKIREDGSHINIIKDEPC</sequence>
<proteinExistence type="evidence at protein level"/>
<comment type="function">
    <text evidence="4 5">As a strong inhibitor of acrosin, it is required for normal spermiogenesis. It probably hinders premature activation of proacrosin and other proteases, thus preventing the cascade of events leading to spermiogenesis defects (PubMed:21705336, PubMed:28554943). May be involved in the regulation of serine protease-dependent germ cell apoptosis (PubMed:21705336). It also inhibits trypsin (PubMed:21705336).</text>
</comment>
<comment type="subcellular location">
    <subcellularLocation>
        <location evidence="1">Secreted</location>
    </subcellularLocation>
    <subcellularLocation>
        <location evidence="5">Cytoplasmic vesicle</location>
        <location evidence="5">Secretory vesicle</location>
        <location evidence="5">Acrosome</location>
    </subcellularLocation>
</comment>
<comment type="alternative products">
    <event type="alternative initiation"/>
    <isoform>
        <id>Q8BMY7-1</id>
        <name>1</name>
        <sequence type="displayed"/>
    </isoform>
    <isoform>
        <id>Q8BMY7-2</id>
        <name>2</name>
        <sequence type="described" ref="VSP_060766"/>
    </isoform>
</comment>
<comment type="tissue specificity">
    <text evidence="4 6">Expressed in sperm (at protein level). Expressed in testis but not in ovary, brain, heart, kidney or lung. Within testis, expressed in epididymis and germ cells.</text>
</comment>
<comment type="developmental stage">
    <text evidence="4">First expressed at 16 days postpartum (dpp). Level increases until 20 dpp and is maintained into adulthood (at protein level).</text>
</comment>
<comment type="disruption phenotype">
    <text evidence="5">Knockout male mice are completely infertile, whereas no reproductive defects are observed in females. Spermatozoa are completely absent from caudal epididymis, which only contains round cells likely corresponding to round spermatids and multinucleated cells. Seminiferous tubules contain germ cells up to the early round-spermatid stage but condensed and elongated spermatids and mature spermatozoa are completely absent. Round spermatids do not contain an acrosomal vesicle.</text>
</comment>
<comment type="miscellaneous">
    <text>On the 2D-gel the determined pI of this protein is: 5, its MW is: 8 kDa.</text>
</comment>
<organism>
    <name type="scientific">Mus musculus</name>
    <name type="common">Mouse</name>
    <dbReference type="NCBI Taxonomy" id="10090"/>
    <lineage>
        <taxon>Eukaryota</taxon>
        <taxon>Metazoa</taxon>
        <taxon>Chordata</taxon>
        <taxon>Craniata</taxon>
        <taxon>Vertebrata</taxon>
        <taxon>Euteleostomi</taxon>
        <taxon>Mammalia</taxon>
        <taxon>Eutheria</taxon>
        <taxon>Euarchontoglires</taxon>
        <taxon>Glires</taxon>
        <taxon>Rodentia</taxon>
        <taxon>Myomorpha</taxon>
        <taxon>Muroidea</taxon>
        <taxon>Muridae</taxon>
        <taxon>Murinae</taxon>
        <taxon>Mus</taxon>
        <taxon>Mus</taxon>
    </lineage>
</organism>
<name>ISK2_MOUSE</name>
<feature type="signal peptide" evidence="2">
    <location>
        <begin position="1"/>
        <end position="16"/>
    </location>
</feature>
<feature type="chain" id="PRO_0000016563" description="Serine protease inhibitor Kazal-type 2">
    <location>
        <begin position="17"/>
        <end position="86"/>
    </location>
</feature>
<feature type="domain" description="Kazal-like" evidence="3">
    <location>
        <begin position="32"/>
        <end position="86"/>
    </location>
</feature>
<feature type="site" description="Reactive bond" evidence="3">
    <location>
        <begin position="48"/>
        <end position="49"/>
    </location>
</feature>
<feature type="disulfide bond" evidence="3">
    <location>
        <begin position="38"/>
        <end position="68"/>
    </location>
</feature>
<feature type="disulfide bond" evidence="3">
    <location>
        <begin position="46"/>
        <end position="65"/>
    </location>
</feature>
<feature type="disulfide bond" evidence="3">
    <location>
        <begin position="54"/>
        <end position="86"/>
    </location>
</feature>
<feature type="splice variant" id="VSP_060766" description="In isoform 2." evidence="7">
    <location>
        <begin position="1"/>
        <end position="27"/>
    </location>
</feature>
<reference key="1">
    <citation type="journal article" date="2005" name="Science">
        <title>The transcriptional landscape of the mammalian genome.</title>
        <authorList>
            <person name="Carninci P."/>
            <person name="Kasukawa T."/>
            <person name="Katayama S."/>
            <person name="Gough J."/>
            <person name="Frith M.C."/>
            <person name="Maeda N."/>
            <person name="Oyama R."/>
            <person name="Ravasi T."/>
            <person name="Lenhard B."/>
            <person name="Wells C."/>
            <person name="Kodzius R."/>
            <person name="Shimokawa K."/>
            <person name="Bajic V.B."/>
            <person name="Brenner S.E."/>
            <person name="Batalov S."/>
            <person name="Forrest A.R."/>
            <person name="Zavolan M."/>
            <person name="Davis M.J."/>
            <person name="Wilming L.G."/>
            <person name="Aidinis V."/>
            <person name="Allen J.E."/>
            <person name="Ambesi-Impiombato A."/>
            <person name="Apweiler R."/>
            <person name="Aturaliya R.N."/>
            <person name="Bailey T.L."/>
            <person name="Bansal M."/>
            <person name="Baxter L."/>
            <person name="Beisel K.W."/>
            <person name="Bersano T."/>
            <person name="Bono H."/>
            <person name="Chalk A.M."/>
            <person name="Chiu K.P."/>
            <person name="Choudhary V."/>
            <person name="Christoffels A."/>
            <person name="Clutterbuck D.R."/>
            <person name="Crowe M.L."/>
            <person name="Dalla E."/>
            <person name="Dalrymple B.P."/>
            <person name="de Bono B."/>
            <person name="Della Gatta G."/>
            <person name="di Bernardo D."/>
            <person name="Down T."/>
            <person name="Engstrom P."/>
            <person name="Fagiolini M."/>
            <person name="Faulkner G."/>
            <person name="Fletcher C.F."/>
            <person name="Fukushima T."/>
            <person name="Furuno M."/>
            <person name="Futaki S."/>
            <person name="Gariboldi M."/>
            <person name="Georgii-Hemming P."/>
            <person name="Gingeras T.R."/>
            <person name="Gojobori T."/>
            <person name="Green R.E."/>
            <person name="Gustincich S."/>
            <person name="Harbers M."/>
            <person name="Hayashi Y."/>
            <person name="Hensch T.K."/>
            <person name="Hirokawa N."/>
            <person name="Hill D."/>
            <person name="Huminiecki L."/>
            <person name="Iacono M."/>
            <person name="Ikeo K."/>
            <person name="Iwama A."/>
            <person name="Ishikawa T."/>
            <person name="Jakt M."/>
            <person name="Kanapin A."/>
            <person name="Katoh M."/>
            <person name="Kawasawa Y."/>
            <person name="Kelso J."/>
            <person name="Kitamura H."/>
            <person name="Kitano H."/>
            <person name="Kollias G."/>
            <person name="Krishnan S.P."/>
            <person name="Kruger A."/>
            <person name="Kummerfeld S.K."/>
            <person name="Kurochkin I.V."/>
            <person name="Lareau L.F."/>
            <person name="Lazarevic D."/>
            <person name="Lipovich L."/>
            <person name="Liu J."/>
            <person name="Liuni S."/>
            <person name="McWilliam S."/>
            <person name="Madan Babu M."/>
            <person name="Madera M."/>
            <person name="Marchionni L."/>
            <person name="Matsuda H."/>
            <person name="Matsuzawa S."/>
            <person name="Miki H."/>
            <person name="Mignone F."/>
            <person name="Miyake S."/>
            <person name="Morris K."/>
            <person name="Mottagui-Tabar S."/>
            <person name="Mulder N."/>
            <person name="Nakano N."/>
            <person name="Nakauchi H."/>
            <person name="Ng P."/>
            <person name="Nilsson R."/>
            <person name="Nishiguchi S."/>
            <person name="Nishikawa S."/>
            <person name="Nori F."/>
            <person name="Ohara O."/>
            <person name="Okazaki Y."/>
            <person name="Orlando V."/>
            <person name="Pang K.C."/>
            <person name="Pavan W.J."/>
            <person name="Pavesi G."/>
            <person name="Pesole G."/>
            <person name="Petrovsky N."/>
            <person name="Piazza S."/>
            <person name="Reed J."/>
            <person name="Reid J.F."/>
            <person name="Ring B.Z."/>
            <person name="Ringwald M."/>
            <person name="Rost B."/>
            <person name="Ruan Y."/>
            <person name="Salzberg S.L."/>
            <person name="Sandelin A."/>
            <person name="Schneider C."/>
            <person name="Schoenbach C."/>
            <person name="Sekiguchi K."/>
            <person name="Semple C.A."/>
            <person name="Seno S."/>
            <person name="Sessa L."/>
            <person name="Sheng Y."/>
            <person name="Shibata Y."/>
            <person name="Shimada H."/>
            <person name="Shimada K."/>
            <person name="Silva D."/>
            <person name="Sinclair B."/>
            <person name="Sperling S."/>
            <person name="Stupka E."/>
            <person name="Sugiura K."/>
            <person name="Sultana R."/>
            <person name="Takenaka Y."/>
            <person name="Taki K."/>
            <person name="Tammoja K."/>
            <person name="Tan S.L."/>
            <person name="Tang S."/>
            <person name="Taylor M.S."/>
            <person name="Tegner J."/>
            <person name="Teichmann S.A."/>
            <person name="Ueda H.R."/>
            <person name="van Nimwegen E."/>
            <person name="Verardo R."/>
            <person name="Wei C.L."/>
            <person name="Yagi K."/>
            <person name="Yamanishi H."/>
            <person name="Zabarovsky E."/>
            <person name="Zhu S."/>
            <person name="Zimmer A."/>
            <person name="Hide W."/>
            <person name="Bult C."/>
            <person name="Grimmond S.M."/>
            <person name="Teasdale R.D."/>
            <person name="Liu E.T."/>
            <person name="Brusic V."/>
            <person name="Quackenbush J."/>
            <person name="Wahlestedt C."/>
            <person name="Mattick J.S."/>
            <person name="Hume D.A."/>
            <person name="Kai C."/>
            <person name="Sasaki D."/>
            <person name="Tomaru Y."/>
            <person name="Fukuda S."/>
            <person name="Kanamori-Katayama M."/>
            <person name="Suzuki M."/>
            <person name="Aoki J."/>
            <person name="Arakawa T."/>
            <person name="Iida J."/>
            <person name="Imamura K."/>
            <person name="Itoh M."/>
            <person name="Kato T."/>
            <person name="Kawaji H."/>
            <person name="Kawagashira N."/>
            <person name="Kawashima T."/>
            <person name="Kojima M."/>
            <person name="Kondo S."/>
            <person name="Konno H."/>
            <person name="Nakano K."/>
            <person name="Ninomiya N."/>
            <person name="Nishio T."/>
            <person name="Okada M."/>
            <person name="Plessy C."/>
            <person name="Shibata K."/>
            <person name="Shiraki T."/>
            <person name="Suzuki S."/>
            <person name="Tagami M."/>
            <person name="Waki K."/>
            <person name="Watahiki A."/>
            <person name="Okamura-Oho Y."/>
            <person name="Suzuki H."/>
            <person name="Kawai J."/>
            <person name="Hayashizaki Y."/>
        </authorList>
    </citation>
    <scope>NUCLEOTIDE SEQUENCE [LARGE SCALE MRNA] (ISOFORM 1)</scope>
    <source>
        <strain>C57BL/6J</strain>
        <tissue>Testis</tissue>
    </source>
</reference>
<reference evidence="8" key="2">
    <citation type="journal article" date="2009" name="PLoS Biol.">
        <title>Lineage-specific biology revealed by a finished genome assembly of the mouse.</title>
        <authorList>
            <person name="Church D.M."/>
            <person name="Goodstadt L."/>
            <person name="Hillier L.W."/>
            <person name="Zody M.C."/>
            <person name="Goldstein S."/>
            <person name="She X."/>
            <person name="Bult C.J."/>
            <person name="Agarwala R."/>
            <person name="Cherry J.L."/>
            <person name="DiCuccio M."/>
            <person name="Hlavina W."/>
            <person name="Kapustin Y."/>
            <person name="Meric P."/>
            <person name="Maglott D."/>
            <person name="Birtle Z."/>
            <person name="Marques A.C."/>
            <person name="Graves T."/>
            <person name="Zhou S."/>
            <person name="Teague B."/>
            <person name="Potamousis K."/>
            <person name="Churas C."/>
            <person name="Place M."/>
            <person name="Herschleb J."/>
            <person name="Runnheim R."/>
            <person name="Forrest D."/>
            <person name="Amos-Landgraf J."/>
            <person name="Schwartz D.C."/>
            <person name="Cheng Z."/>
            <person name="Lindblad-Toh K."/>
            <person name="Eichler E.E."/>
            <person name="Ponting C.P."/>
        </authorList>
    </citation>
    <scope>NUCLEOTIDE SEQUENCE [LARGE SCALE GENOMIC DNA]</scope>
    <source>
        <strain evidence="8">C57BL/6J</strain>
    </source>
</reference>
<reference key="3">
    <citation type="journal article" date="2004" name="Genome Res.">
        <title>The status, quality, and expansion of the NIH full-length cDNA project: the Mammalian Gene Collection (MGC).</title>
        <authorList>
            <consortium name="The MGC Project Team"/>
        </authorList>
    </citation>
    <scope>NUCLEOTIDE SEQUENCE [LARGE SCALE MRNA] (ISOFORM 1)</scope>
    <source>
        <tissue>Testis</tissue>
    </source>
</reference>
<reference key="4">
    <citation type="submission" date="2009-06" db="UniProtKB">
        <title>Novel miRNA cluster generated by extensive alternate splicing of a multicopy non-coding RNA from mouse Y-heterochromatin.</title>
        <authorList>
            <person name="Bhattacharya R."/>
            <person name="Dhople V.M."/>
            <person name="Jesudasan R.A."/>
        </authorList>
    </citation>
    <scope>PARTIAL PROTEIN SEQUENCE (ISOFORM 2)</scope>
    <scope>TISSUE SPECIFICITY</scope>
    <scope>IDENTIFICATION BY MASS SPECTROMETRY</scope>
    <source>
        <strain>RIII</strain>
        <tissue>Sperm</tissue>
    </source>
</reference>
<reference key="5">
    <citation type="journal article" date="2010" name="Cell">
        <title>A tissue-specific atlas of mouse protein phosphorylation and expression.</title>
        <authorList>
            <person name="Huttlin E.L."/>
            <person name="Jedrychowski M.P."/>
            <person name="Elias J.E."/>
            <person name="Goswami T."/>
            <person name="Rad R."/>
            <person name="Beausoleil S.A."/>
            <person name="Villen J."/>
            <person name="Haas W."/>
            <person name="Sowa M.E."/>
            <person name="Gygi S.P."/>
        </authorList>
    </citation>
    <scope>IDENTIFICATION BY MASS SPECTROMETRY [LARGE SCALE ANALYSIS]</scope>
    <source>
        <tissue>Testis</tissue>
    </source>
</reference>
<reference key="6">
    <citation type="journal article" date="2011" name="J. Biol. Chem.">
        <title>Impaired spermatogenesis and fertility in mice carrying a mutation in the Spink2 gene expressed predominantly in testes.</title>
        <authorList>
            <person name="Lee B."/>
            <person name="Park I."/>
            <person name="Jin S."/>
            <person name="Choi H."/>
            <person name="Kwon J.T."/>
            <person name="Kim J."/>
            <person name="Jeong J."/>
            <person name="Cho B.N."/>
            <person name="Eddy E.M."/>
            <person name="Cho C."/>
        </authorList>
    </citation>
    <scope>FUNCTION</scope>
    <scope>TISSUE SPECIFICITY</scope>
    <scope>DEVELOPMENTAL STAGE</scope>
</reference>
<reference key="7">
    <citation type="journal article" date="2017" name="EMBO Mol. Med.">
        <title>SPINK2 deficiency causes infertility by inducing sperm defects in heterozygotes and azoospermia in homozygotes.</title>
        <authorList>
            <person name="Kherraf Z.E."/>
            <person name="Christou-Kent M."/>
            <person name="Karaouzene T."/>
            <person name="Amiri-Yekta A."/>
            <person name="Martinez G."/>
            <person name="Vargas A.S."/>
            <person name="Lambert E."/>
            <person name="Borel C."/>
            <person name="Dorphin B."/>
            <person name="Aknin-Seifer I."/>
            <person name="Mitchell M.J."/>
            <person name="Metzler-Guillemain C."/>
            <person name="Escoffier J."/>
            <person name="Nef S."/>
            <person name="Grepillat M."/>
            <person name="Thierry-Mieg N."/>
            <person name="Satre V."/>
            <person name="Bailly M."/>
            <person name="Boitrelle F."/>
            <person name="Pernet-Gallay K."/>
            <person name="Hennebicq S."/>
            <person name="Faure J."/>
            <person name="Bottari S.P."/>
            <person name="Coutton C."/>
            <person name="Ray P.F."/>
            <person name="Arnoult C."/>
        </authorList>
    </citation>
    <scope>FUNCTION</scope>
    <scope>SUBCELLULAR LOCATION</scope>
    <scope>DISRUPTION PHENOTYPE</scope>
</reference>
<protein>
    <recommendedName>
        <fullName>Serine protease inhibitor Kazal-type 2</fullName>
    </recommendedName>
</protein>
<dbReference type="EMBL" id="AK005709">
    <property type="protein sequence ID" value="BAC25122.1"/>
    <property type="molecule type" value="mRNA"/>
</dbReference>
<dbReference type="EMBL" id="AC165975">
    <property type="status" value="NOT_ANNOTATED_CDS"/>
    <property type="molecule type" value="Genomic_DNA"/>
</dbReference>
<dbReference type="EMBL" id="BC087876">
    <property type="protein sequence ID" value="AAH87876.1"/>
    <property type="molecule type" value="mRNA"/>
</dbReference>
<dbReference type="CCDS" id="CCDS39121.1">
    <molecule id="Q8BMY7-1"/>
</dbReference>
<dbReference type="CCDS" id="CCDS80306.1">
    <molecule id="Q8BMY7-2"/>
</dbReference>
<dbReference type="RefSeq" id="NP_001276696.1">
    <molecule id="Q8BMY7-2"/>
    <property type="nucleotide sequence ID" value="NM_001289767.1"/>
</dbReference>
<dbReference type="RefSeq" id="NP_001276697.1">
    <property type="nucleotide sequence ID" value="NM_001289768.1"/>
</dbReference>
<dbReference type="RefSeq" id="NP_899107.1">
    <molecule id="Q8BMY7-1"/>
    <property type="nucleotide sequence ID" value="NM_183284.3"/>
</dbReference>
<dbReference type="SMR" id="Q8BMY7"/>
<dbReference type="BioGRID" id="213795">
    <property type="interactions" value="1"/>
</dbReference>
<dbReference type="FunCoup" id="Q8BMY7">
    <property type="interactions" value="20"/>
</dbReference>
<dbReference type="STRING" id="10090.ENSMUSP00000067117"/>
<dbReference type="MEROPS" id="I01.012"/>
<dbReference type="PhosphoSitePlus" id="Q8BMY7"/>
<dbReference type="PaxDb" id="10090-ENSMUSP00000067117"/>
<dbReference type="PeptideAtlas" id="Q8BMY7"/>
<dbReference type="ProteomicsDB" id="267012">
    <molecule id="Q8BMY7-1"/>
</dbReference>
<dbReference type="ProteomicsDB" id="370190"/>
<dbReference type="Antibodypedia" id="12523">
    <property type="antibodies" value="40 antibodies from 17 providers"/>
</dbReference>
<dbReference type="DNASU" id="69982"/>
<dbReference type="Ensembl" id="ENSMUST00000065216.11">
    <molecule id="Q8BMY7-1"/>
    <property type="protein sequence ID" value="ENSMUSP00000067117.5"/>
    <property type="gene ID" value="ENSMUSG00000053030.12"/>
</dbReference>
<dbReference type="Ensembl" id="ENSMUST00000121825.2">
    <molecule id="Q8BMY7-2"/>
    <property type="protein sequence ID" value="ENSMUSP00000113823.2"/>
    <property type="gene ID" value="ENSMUSG00000053030.12"/>
</dbReference>
<dbReference type="GeneID" id="69982"/>
<dbReference type="KEGG" id="mmu:69982"/>
<dbReference type="UCSC" id="uc008xvx.2">
    <molecule id="Q8BMY7-1"/>
    <property type="organism name" value="mouse"/>
</dbReference>
<dbReference type="AGR" id="MGI:1917232"/>
<dbReference type="CTD" id="6691"/>
<dbReference type="MGI" id="MGI:1917232">
    <property type="gene designation" value="Spink2"/>
</dbReference>
<dbReference type="VEuPathDB" id="HostDB:ENSMUSG00000053030"/>
<dbReference type="eggNOG" id="KOG3649">
    <property type="taxonomic scope" value="Eukaryota"/>
</dbReference>
<dbReference type="GeneTree" id="ENSGT00530000064285"/>
<dbReference type="HOGENOM" id="CLU_169765_2_0_1"/>
<dbReference type="InParanoid" id="Q8BMY7"/>
<dbReference type="OMA" id="EYSTPNC"/>
<dbReference type="OrthoDB" id="126772at2759"/>
<dbReference type="PhylomeDB" id="Q8BMY7"/>
<dbReference type="BioGRID-ORCS" id="69982">
    <property type="hits" value="4 hits in 76 CRISPR screens"/>
</dbReference>
<dbReference type="ChiTaRS" id="Spink2">
    <property type="organism name" value="mouse"/>
</dbReference>
<dbReference type="PRO" id="PR:Q8BMY7"/>
<dbReference type="Proteomes" id="UP000000589">
    <property type="component" value="Chromosome 5"/>
</dbReference>
<dbReference type="RNAct" id="Q8BMY7">
    <property type="molecule type" value="protein"/>
</dbReference>
<dbReference type="Bgee" id="ENSMUSG00000053030">
    <property type="expression patterns" value="Expressed in spermatid and 81 other cell types or tissues"/>
</dbReference>
<dbReference type="ExpressionAtlas" id="Q8BMY7">
    <property type="expression patterns" value="baseline and differential"/>
</dbReference>
<dbReference type="GO" id="GO:0001669">
    <property type="term" value="C:acrosomal vesicle"/>
    <property type="evidence" value="ECO:0000314"/>
    <property type="project" value="UniProtKB"/>
</dbReference>
<dbReference type="GO" id="GO:0005737">
    <property type="term" value="C:cytoplasm"/>
    <property type="evidence" value="ECO:0000314"/>
    <property type="project" value="MGI"/>
</dbReference>
<dbReference type="GO" id="GO:0005576">
    <property type="term" value="C:extracellular region"/>
    <property type="evidence" value="ECO:0007669"/>
    <property type="project" value="UniProtKB-SubCell"/>
</dbReference>
<dbReference type="GO" id="GO:0043005">
    <property type="term" value="C:neuron projection"/>
    <property type="evidence" value="ECO:0000314"/>
    <property type="project" value="MGI"/>
</dbReference>
<dbReference type="GO" id="GO:0004867">
    <property type="term" value="F:serine-type endopeptidase inhibitor activity"/>
    <property type="evidence" value="ECO:0007669"/>
    <property type="project" value="UniProtKB-KW"/>
</dbReference>
<dbReference type="GO" id="GO:0001675">
    <property type="term" value="P:acrosome assembly"/>
    <property type="evidence" value="ECO:0000315"/>
    <property type="project" value="UniProtKB"/>
</dbReference>
<dbReference type="GO" id="GO:0006915">
    <property type="term" value="P:apoptotic process"/>
    <property type="evidence" value="ECO:0007669"/>
    <property type="project" value="UniProtKB-KW"/>
</dbReference>
<dbReference type="GO" id="GO:0009566">
    <property type="term" value="P:fertilization"/>
    <property type="evidence" value="ECO:0000315"/>
    <property type="project" value="MGI"/>
</dbReference>
<dbReference type="GO" id="GO:0002176">
    <property type="term" value="P:male germ cell proliferation"/>
    <property type="evidence" value="ECO:0000315"/>
    <property type="project" value="MGI"/>
</dbReference>
<dbReference type="GO" id="GO:0008584">
    <property type="term" value="P:male gonad development"/>
    <property type="evidence" value="ECO:0000315"/>
    <property type="project" value="MGI"/>
</dbReference>
<dbReference type="GO" id="GO:0043065">
    <property type="term" value="P:positive regulation of apoptotic process"/>
    <property type="evidence" value="ECO:0000314"/>
    <property type="project" value="MGI"/>
</dbReference>
<dbReference type="GO" id="GO:0072520">
    <property type="term" value="P:seminiferous tubule development"/>
    <property type="evidence" value="ECO:0000315"/>
    <property type="project" value="MGI"/>
</dbReference>
<dbReference type="GO" id="GO:0007286">
    <property type="term" value="P:spermatid development"/>
    <property type="evidence" value="ECO:0000315"/>
    <property type="project" value="UniProtKB"/>
</dbReference>
<dbReference type="GO" id="GO:0007283">
    <property type="term" value="P:spermatogenesis"/>
    <property type="evidence" value="ECO:0000315"/>
    <property type="project" value="MGI"/>
</dbReference>
<dbReference type="FunFam" id="3.30.60.30:FF:000031">
    <property type="entry name" value="Serine protease inhibitor Kazal-type 2"/>
    <property type="match status" value="1"/>
</dbReference>
<dbReference type="Gene3D" id="3.30.60.30">
    <property type="match status" value="1"/>
</dbReference>
<dbReference type="InterPro" id="IPR002350">
    <property type="entry name" value="Kazal_dom"/>
</dbReference>
<dbReference type="InterPro" id="IPR036058">
    <property type="entry name" value="Kazal_dom_sf"/>
</dbReference>
<dbReference type="InterPro" id="IPR042167">
    <property type="entry name" value="SPINK2"/>
</dbReference>
<dbReference type="PANTHER" id="PTHR47608:SF1">
    <property type="entry name" value="SERINE PROTEASE INHIBITOR KAZAL-TYPE 2"/>
    <property type="match status" value="1"/>
</dbReference>
<dbReference type="PANTHER" id="PTHR47608">
    <property type="entry name" value="SERINE PROTEASE INHIBITOR KAZAL-TYPE 2, SPINK2"/>
    <property type="match status" value="1"/>
</dbReference>
<dbReference type="Pfam" id="PF00050">
    <property type="entry name" value="Kazal_1"/>
    <property type="match status" value="1"/>
</dbReference>
<dbReference type="SMART" id="SM00280">
    <property type="entry name" value="KAZAL"/>
    <property type="match status" value="1"/>
</dbReference>
<dbReference type="SUPFAM" id="SSF100895">
    <property type="entry name" value="Kazal-type serine protease inhibitors"/>
    <property type="match status" value="1"/>
</dbReference>
<dbReference type="PROSITE" id="PS00282">
    <property type="entry name" value="KAZAL_1"/>
    <property type="match status" value="1"/>
</dbReference>
<dbReference type="PROSITE" id="PS51465">
    <property type="entry name" value="KAZAL_2"/>
    <property type="match status" value="1"/>
</dbReference>
<gene>
    <name type="primary">Spink2</name>
</gene>
<accession>Q8BMY7</accession>
<accession>D3Z3X9</accession>
<accession>Q5M8S4</accession>
<evidence type="ECO:0000250" key="1">
    <source>
        <dbReference type="UniProtKB" id="P20155"/>
    </source>
</evidence>
<evidence type="ECO:0000255" key="2"/>
<evidence type="ECO:0000255" key="3">
    <source>
        <dbReference type="PROSITE-ProRule" id="PRU00798"/>
    </source>
</evidence>
<evidence type="ECO:0000269" key="4">
    <source>
    </source>
</evidence>
<evidence type="ECO:0000269" key="5">
    <source>
    </source>
</evidence>
<evidence type="ECO:0000269" key="6">
    <source ref="4"/>
</evidence>
<evidence type="ECO:0000305" key="7"/>
<evidence type="ECO:0000312" key="8">
    <source>
        <dbReference type="Proteomes" id="UP000000589"/>
    </source>
</evidence>